<gene>
    <name evidence="1" type="primary">purA</name>
    <name type="ordered locus">ECDH10B_4372</name>
</gene>
<reference key="1">
    <citation type="journal article" date="2008" name="J. Bacteriol.">
        <title>The complete genome sequence of Escherichia coli DH10B: insights into the biology of a laboratory workhorse.</title>
        <authorList>
            <person name="Durfee T."/>
            <person name="Nelson R."/>
            <person name="Baldwin S."/>
            <person name="Plunkett G. III"/>
            <person name="Burland V."/>
            <person name="Mau B."/>
            <person name="Petrosino J.F."/>
            <person name="Qin X."/>
            <person name="Muzny D.M."/>
            <person name="Ayele M."/>
            <person name="Gibbs R.A."/>
            <person name="Csorgo B."/>
            <person name="Posfai G."/>
            <person name="Weinstock G.M."/>
            <person name="Blattner F.R."/>
        </authorList>
    </citation>
    <scope>NUCLEOTIDE SEQUENCE [LARGE SCALE GENOMIC DNA]</scope>
    <source>
        <strain>K12 / DH10B</strain>
    </source>
</reference>
<accession>B1XDS8</accession>
<sequence>MGNNVVVLGTQWGDEGKGKIVDLLTERAKYVVRYQGGHNAGHTLVINGEKTVLHLIPSGILRENVTSIIGNGVVLSPAALMKEMKELEDRGIPVRERLLLSEACPLILDYHVALDNAREKARGAKAIGTTGRGIGPAYEDKVARRGLRVGDLFDKETFAEKLKEVMEYHNFQLVNYYKAEAVDYQKVLDDTMAVADILTSMVVDVSDLLDQARQRGDFVMFEGAQGTLLDIDHGTYPYVTSSNTTAGGVATGSGLGPRYVDYVLGILKAYSTRVGAGPFPTELFDETGEFLCKQGNEFGATTGRRRRTGWLDTVAVRRAVQLNSLSGFCLTKLDVLDGLKEVKLCVAYRMPDGREVTTTPLAADDWKGVEPIYETMPGWSESTFGVKDRSGLPQAALNYIKRIEELTGVPIDIISTGPDRTETMILRDPFDA</sequence>
<evidence type="ECO:0000255" key="1">
    <source>
        <dbReference type="HAMAP-Rule" id="MF_00011"/>
    </source>
</evidence>
<dbReference type="EC" id="6.3.4.4" evidence="1"/>
<dbReference type="EMBL" id="CP000948">
    <property type="protein sequence ID" value="ACB05165.1"/>
    <property type="molecule type" value="Genomic_DNA"/>
</dbReference>
<dbReference type="RefSeq" id="WP_000527955.1">
    <property type="nucleotide sequence ID" value="NC_010473.1"/>
</dbReference>
<dbReference type="SMR" id="B1XDS8"/>
<dbReference type="GeneID" id="75202411"/>
<dbReference type="KEGG" id="ecd:ECDH10B_4372"/>
<dbReference type="HOGENOM" id="CLU_029848_0_0_6"/>
<dbReference type="UniPathway" id="UPA00075">
    <property type="reaction ID" value="UER00335"/>
</dbReference>
<dbReference type="GO" id="GO:0005737">
    <property type="term" value="C:cytoplasm"/>
    <property type="evidence" value="ECO:0007669"/>
    <property type="project" value="UniProtKB-SubCell"/>
</dbReference>
<dbReference type="GO" id="GO:0004019">
    <property type="term" value="F:adenylosuccinate synthase activity"/>
    <property type="evidence" value="ECO:0007669"/>
    <property type="project" value="UniProtKB-UniRule"/>
</dbReference>
<dbReference type="GO" id="GO:0005525">
    <property type="term" value="F:GTP binding"/>
    <property type="evidence" value="ECO:0007669"/>
    <property type="project" value="UniProtKB-UniRule"/>
</dbReference>
<dbReference type="GO" id="GO:0000287">
    <property type="term" value="F:magnesium ion binding"/>
    <property type="evidence" value="ECO:0007669"/>
    <property type="project" value="UniProtKB-UniRule"/>
</dbReference>
<dbReference type="GO" id="GO:0044208">
    <property type="term" value="P:'de novo' AMP biosynthetic process"/>
    <property type="evidence" value="ECO:0007669"/>
    <property type="project" value="UniProtKB-UniRule"/>
</dbReference>
<dbReference type="GO" id="GO:0046040">
    <property type="term" value="P:IMP metabolic process"/>
    <property type="evidence" value="ECO:0007669"/>
    <property type="project" value="TreeGrafter"/>
</dbReference>
<dbReference type="CDD" id="cd03108">
    <property type="entry name" value="AdSS"/>
    <property type="match status" value="1"/>
</dbReference>
<dbReference type="FunFam" id="1.10.300.10:FF:000001">
    <property type="entry name" value="Adenylosuccinate synthetase"/>
    <property type="match status" value="1"/>
</dbReference>
<dbReference type="FunFam" id="3.90.170.10:FF:000001">
    <property type="entry name" value="Adenylosuccinate synthetase"/>
    <property type="match status" value="1"/>
</dbReference>
<dbReference type="Gene3D" id="3.40.440.10">
    <property type="entry name" value="Adenylosuccinate Synthetase, subunit A, domain 1"/>
    <property type="match status" value="1"/>
</dbReference>
<dbReference type="Gene3D" id="1.10.300.10">
    <property type="entry name" value="Adenylosuccinate Synthetase, subunit A, domain 2"/>
    <property type="match status" value="1"/>
</dbReference>
<dbReference type="Gene3D" id="3.90.170.10">
    <property type="entry name" value="Adenylosuccinate Synthetase, subunit A, domain 3"/>
    <property type="match status" value="1"/>
</dbReference>
<dbReference type="HAMAP" id="MF_00011">
    <property type="entry name" value="Adenylosucc_synth"/>
    <property type="match status" value="1"/>
</dbReference>
<dbReference type="InterPro" id="IPR018220">
    <property type="entry name" value="Adenylosuccin_syn_GTP-bd"/>
</dbReference>
<dbReference type="InterPro" id="IPR033128">
    <property type="entry name" value="Adenylosuccin_syn_Lys_AS"/>
</dbReference>
<dbReference type="InterPro" id="IPR042109">
    <property type="entry name" value="Adenylosuccinate_synth_dom1"/>
</dbReference>
<dbReference type="InterPro" id="IPR042110">
    <property type="entry name" value="Adenylosuccinate_synth_dom2"/>
</dbReference>
<dbReference type="InterPro" id="IPR042111">
    <property type="entry name" value="Adenylosuccinate_synth_dom3"/>
</dbReference>
<dbReference type="InterPro" id="IPR001114">
    <property type="entry name" value="Adenylosuccinate_synthetase"/>
</dbReference>
<dbReference type="InterPro" id="IPR027417">
    <property type="entry name" value="P-loop_NTPase"/>
</dbReference>
<dbReference type="NCBIfam" id="NF002223">
    <property type="entry name" value="PRK01117.1"/>
    <property type="match status" value="1"/>
</dbReference>
<dbReference type="NCBIfam" id="TIGR00184">
    <property type="entry name" value="purA"/>
    <property type="match status" value="1"/>
</dbReference>
<dbReference type="PANTHER" id="PTHR11846">
    <property type="entry name" value="ADENYLOSUCCINATE SYNTHETASE"/>
    <property type="match status" value="1"/>
</dbReference>
<dbReference type="PANTHER" id="PTHR11846:SF0">
    <property type="entry name" value="ADENYLOSUCCINATE SYNTHETASE"/>
    <property type="match status" value="1"/>
</dbReference>
<dbReference type="Pfam" id="PF00709">
    <property type="entry name" value="Adenylsucc_synt"/>
    <property type="match status" value="1"/>
</dbReference>
<dbReference type="SMART" id="SM00788">
    <property type="entry name" value="Adenylsucc_synt"/>
    <property type="match status" value="1"/>
</dbReference>
<dbReference type="SUPFAM" id="SSF52540">
    <property type="entry name" value="P-loop containing nucleoside triphosphate hydrolases"/>
    <property type="match status" value="1"/>
</dbReference>
<dbReference type="PROSITE" id="PS01266">
    <property type="entry name" value="ADENYLOSUCCIN_SYN_1"/>
    <property type="match status" value="1"/>
</dbReference>
<dbReference type="PROSITE" id="PS00513">
    <property type="entry name" value="ADENYLOSUCCIN_SYN_2"/>
    <property type="match status" value="1"/>
</dbReference>
<comment type="function">
    <text evidence="1">Plays an important role in the de novo pathway of purine nucleotide biosynthesis. Catalyzes the first committed step in the biosynthesis of AMP from IMP.</text>
</comment>
<comment type="catalytic activity">
    <reaction evidence="1">
        <text>IMP + L-aspartate + GTP = N(6)-(1,2-dicarboxyethyl)-AMP + GDP + phosphate + 2 H(+)</text>
        <dbReference type="Rhea" id="RHEA:15753"/>
        <dbReference type="ChEBI" id="CHEBI:15378"/>
        <dbReference type="ChEBI" id="CHEBI:29991"/>
        <dbReference type="ChEBI" id="CHEBI:37565"/>
        <dbReference type="ChEBI" id="CHEBI:43474"/>
        <dbReference type="ChEBI" id="CHEBI:57567"/>
        <dbReference type="ChEBI" id="CHEBI:58053"/>
        <dbReference type="ChEBI" id="CHEBI:58189"/>
        <dbReference type="EC" id="6.3.4.4"/>
    </reaction>
</comment>
<comment type="cofactor">
    <cofactor evidence="1">
        <name>Mg(2+)</name>
        <dbReference type="ChEBI" id="CHEBI:18420"/>
    </cofactor>
    <text evidence="1">Binds 1 Mg(2+) ion per subunit.</text>
</comment>
<comment type="pathway">
    <text evidence="1">Purine metabolism; AMP biosynthesis via de novo pathway; AMP from IMP: step 1/2.</text>
</comment>
<comment type="subunit">
    <text evidence="1">Homodimer.</text>
</comment>
<comment type="subcellular location">
    <subcellularLocation>
        <location evidence="1">Cytoplasm</location>
    </subcellularLocation>
</comment>
<comment type="similarity">
    <text evidence="1">Belongs to the adenylosuccinate synthetase family.</text>
</comment>
<feature type="chain" id="PRO_1000089290" description="Adenylosuccinate synthetase">
    <location>
        <begin position="1"/>
        <end position="432"/>
    </location>
</feature>
<feature type="active site" description="Proton acceptor" evidence="1">
    <location>
        <position position="14"/>
    </location>
</feature>
<feature type="active site" description="Proton donor" evidence="1">
    <location>
        <position position="42"/>
    </location>
</feature>
<feature type="binding site" evidence="1">
    <location>
        <begin position="13"/>
        <end position="19"/>
    </location>
    <ligand>
        <name>GTP</name>
        <dbReference type="ChEBI" id="CHEBI:37565"/>
    </ligand>
</feature>
<feature type="binding site" description="in other chain" evidence="1">
    <location>
        <begin position="14"/>
        <end position="17"/>
    </location>
    <ligand>
        <name>IMP</name>
        <dbReference type="ChEBI" id="CHEBI:58053"/>
        <note>ligand shared between dimeric partners</note>
    </ligand>
</feature>
<feature type="binding site" evidence="1">
    <location>
        <position position="14"/>
    </location>
    <ligand>
        <name>Mg(2+)</name>
        <dbReference type="ChEBI" id="CHEBI:18420"/>
    </ligand>
</feature>
<feature type="binding site" description="in other chain" evidence="1">
    <location>
        <begin position="39"/>
        <end position="42"/>
    </location>
    <ligand>
        <name>IMP</name>
        <dbReference type="ChEBI" id="CHEBI:58053"/>
        <note>ligand shared between dimeric partners</note>
    </ligand>
</feature>
<feature type="binding site" evidence="1">
    <location>
        <begin position="41"/>
        <end position="43"/>
    </location>
    <ligand>
        <name>GTP</name>
        <dbReference type="ChEBI" id="CHEBI:37565"/>
    </ligand>
</feature>
<feature type="binding site" evidence="1">
    <location>
        <position position="41"/>
    </location>
    <ligand>
        <name>Mg(2+)</name>
        <dbReference type="ChEBI" id="CHEBI:18420"/>
    </ligand>
</feature>
<feature type="binding site" description="in other chain" evidence="1">
    <location>
        <position position="130"/>
    </location>
    <ligand>
        <name>IMP</name>
        <dbReference type="ChEBI" id="CHEBI:58053"/>
        <note>ligand shared between dimeric partners</note>
    </ligand>
</feature>
<feature type="binding site" evidence="1">
    <location>
        <position position="144"/>
    </location>
    <ligand>
        <name>IMP</name>
        <dbReference type="ChEBI" id="CHEBI:58053"/>
        <note>ligand shared between dimeric partners</note>
    </ligand>
</feature>
<feature type="binding site" description="in other chain" evidence="1">
    <location>
        <position position="225"/>
    </location>
    <ligand>
        <name>IMP</name>
        <dbReference type="ChEBI" id="CHEBI:58053"/>
        <note>ligand shared between dimeric partners</note>
    </ligand>
</feature>
<feature type="binding site" description="in other chain" evidence="1">
    <location>
        <position position="240"/>
    </location>
    <ligand>
        <name>IMP</name>
        <dbReference type="ChEBI" id="CHEBI:58053"/>
        <note>ligand shared between dimeric partners</note>
    </ligand>
</feature>
<feature type="binding site" evidence="1">
    <location>
        <begin position="300"/>
        <end position="306"/>
    </location>
    <ligand>
        <name>substrate</name>
    </ligand>
</feature>
<feature type="binding site" description="in other chain" evidence="1">
    <location>
        <position position="304"/>
    </location>
    <ligand>
        <name>IMP</name>
        <dbReference type="ChEBI" id="CHEBI:58053"/>
        <note>ligand shared between dimeric partners</note>
    </ligand>
</feature>
<feature type="binding site" evidence="1">
    <location>
        <position position="306"/>
    </location>
    <ligand>
        <name>GTP</name>
        <dbReference type="ChEBI" id="CHEBI:37565"/>
    </ligand>
</feature>
<feature type="binding site" evidence="1">
    <location>
        <begin position="332"/>
        <end position="334"/>
    </location>
    <ligand>
        <name>GTP</name>
        <dbReference type="ChEBI" id="CHEBI:37565"/>
    </ligand>
</feature>
<feature type="binding site" evidence="1">
    <location>
        <begin position="415"/>
        <end position="417"/>
    </location>
    <ligand>
        <name>GTP</name>
        <dbReference type="ChEBI" id="CHEBI:37565"/>
    </ligand>
</feature>
<organism>
    <name type="scientific">Escherichia coli (strain K12 / DH10B)</name>
    <dbReference type="NCBI Taxonomy" id="316385"/>
    <lineage>
        <taxon>Bacteria</taxon>
        <taxon>Pseudomonadati</taxon>
        <taxon>Pseudomonadota</taxon>
        <taxon>Gammaproteobacteria</taxon>
        <taxon>Enterobacterales</taxon>
        <taxon>Enterobacteriaceae</taxon>
        <taxon>Escherichia</taxon>
    </lineage>
</organism>
<name>PURA_ECODH</name>
<proteinExistence type="inferred from homology"/>
<protein>
    <recommendedName>
        <fullName evidence="1">Adenylosuccinate synthetase</fullName>
        <shortName evidence="1">AMPSase</shortName>
        <shortName evidence="1">AdSS</shortName>
        <ecNumber evidence="1">6.3.4.4</ecNumber>
    </recommendedName>
    <alternativeName>
        <fullName evidence="1">IMP--aspartate ligase</fullName>
    </alternativeName>
</protein>
<keyword id="KW-0963">Cytoplasm</keyword>
<keyword id="KW-0342">GTP-binding</keyword>
<keyword id="KW-0436">Ligase</keyword>
<keyword id="KW-0460">Magnesium</keyword>
<keyword id="KW-0479">Metal-binding</keyword>
<keyword id="KW-0547">Nucleotide-binding</keyword>
<keyword id="KW-0658">Purine biosynthesis</keyword>